<reference key="1">
    <citation type="journal article" date="2006" name="Virology">
        <title>The genome of Epstein-Barr virus type 2 strain AG876.</title>
        <authorList>
            <person name="Dolan A."/>
            <person name="Addison C."/>
            <person name="Gatherer D."/>
            <person name="Davison A.J."/>
            <person name="McGeoch D.J."/>
        </authorList>
    </citation>
    <scope>NUCLEOTIDE SEQUENCE [LARGE SCALE GENOMIC DNA]</scope>
</reference>
<protein>
    <recommendedName>
        <fullName>Tegument protein UL51 homolog</fullName>
    </recommendedName>
</protein>
<feature type="chain" id="PRO_0000415968" description="Tegument protein UL51 homolog">
    <location>
        <begin position="1"/>
        <end position="218"/>
    </location>
</feature>
<feature type="region of interest" description="Disordered" evidence="3">
    <location>
        <begin position="199"/>
        <end position="218"/>
    </location>
</feature>
<feature type="lipid moiety-binding region" description="S-palmitoyl cysteine; by host" evidence="2">
    <location>
        <position position="11"/>
    </location>
</feature>
<keyword id="KW-1035">Host cytoplasm</keyword>
<keyword id="KW-1040">Host Golgi apparatus</keyword>
<keyword id="KW-0449">Lipoprotein</keyword>
<keyword id="KW-0564">Palmitate</keyword>
<keyword id="KW-0597">Phosphoprotein</keyword>
<keyword id="KW-1185">Reference proteome</keyword>
<keyword id="KW-0946">Virion</keyword>
<accession>P0CK50</accession>
<accession>P03194</accession>
<accession>Q777F4</accession>
<proteinExistence type="inferred from homology"/>
<dbReference type="EMBL" id="DQ279927">
    <property type="protein sequence ID" value="ABB89238.1"/>
    <property type="molecule type" value="Genomic_DNA"/>
</dbReference>
<dbReference type="RefSeq" id="YP_001129458.1">
    <property type="nucleotide sequence ID" value="NC_009334.1"/>
</dbReference>
<dbReference type="RefSeq" id="YP_401663.1">
    <property type="nucleotide sequence ID" value="NC_007605.1"/>
</dbReference>
<dbReference type="SMR" id="P0CK50"/>
<dbReference type="DNASU" id="3783731"/>
<dbReference type="GeneID" id="3783731"/>
<dbReference type="KEGG" id="vg:3783731"/>
<dbReference type="KEGG" id="vg:5176173"/>
<dbReference type="Proteomes" id="UP000007639">
    <property type="component" value="Genome"/>
</dbReference>
<dbReference type="GO" id="GO:0044177">
    <property type="term" value="C:host cell Golgi apparatus"/>
    <property type="evidence" value="ECO:0007669"/>
    <property type="project" value="UniProtKB-SubCell"/>
</dbReference>
<dbReference type="GO" id="GO:0044423">
    <property type="term" value="C:virion component"/>
    <property type="evidence" value="ECO:0007669"/>
    <property type="project" value="UniProtKB-KW"/>
</dbReference>
<dbReference type="InterPro" id="IPR007619">
    <property type="entry name" value="Herpes_U44"/>
</dbReference>
<dbReference type="Pfam" id="PF04533">
    <property type="entry name" value="Herpes_U44"/>
    <property type="match status" value="1"/>
</dbReference>
<gene>
    <name type="ORF">BSRF1</name>
</gene>
<name>TEG7_EBVA8</name>
<evidence type="ECO:0000250" key="1">
    <source>
        <dbReference type="UniProtKB" id="P0CK49"/>
    </source>
</evidence>
<evidence type="ECO:0000250" key="2">
    <source>
        <dbReference type="UniProtKB" id="P10235"/>
    </source>
</evidence>
<evidence type="ECO:0000256" key="3">
    <source>
        <dbReference type="SAM" id="MobiDB-lite"/>
    </source>
</evidence>
<evidence type="ECO:0000305" key="4"/>
<organismHost>
    <name type="scientific">Homo sapiens</name>
    <name type="common">Human</name>
    <dbReference type="NCBI Taxonomy" id="9606"/>
</organismHost>
<organism>
    <name type="scientific">Epstein-Barr virus (strain AG876)</name>
    <name type="common">HHV-4</name>
    <name type="synonym">Human herpesvirus 4</name>
    <dbReference type="NCBI Taxonomy" id="82830"/>
    <lineage>
        <taxon>Viruses</taxon>
        <taxon>Duplodnaviria</taxon>
        <taxon>Heunggongvirae</taxon>
        <taxon>Peploviricota</taxon>
        <taxon>Herviviricetes</taxon>
        <taxon>Herpesvirales</taxon>
        <taxon>Orthoherpesviridae</taxon>
        <taxon>Gammaherpesvirinae</taxon>
        <taxon>Lymphocryptovirus</taxon>
        <taxon>Lymphocryptovirus humangamma4</taxon>
        <taxon>Epstein-Barr virus (strain GD1)</taxon>
    </lineage>
</organism>
<comment type="function">
    <text evidence="1">Plays several roles during the time course of infection, including egress of virus particles from the perinuclear space and secondary envelopment of cytoplasmic capsids that bud into specific trans-Golgi network (TGN)-derived membranes.</text>
</comment>
<comment type="subunit">
    <text evidence="1 2">Homodimer (By similarity). Interacts with BBRF2; the BBRF2-BSRF1 complexes oligomerize which might play a role in tethering the viral nucleocapsids to the host Golgi membrane during secondary envelopment (By similarity). Interacts with BGLF3.5 (By similarity). Interacts with BALF1 (By similarity). Interacts with glycoprotein gB (By similarity). Interacts with glycoprotein heterodimer gH/gL (By similarity).</text>
</comment>
<comment type="subcellular location">
    <subcellularLocation>
        <location evidence="1">Host cytoplasm</location>
    </subcellularLocation>
    <subcellularLocation>
        <location evidence="1">Virion</location>
    </subcellularLocation>
    <subcellularLocation>
        <location evidence="1">Host Golgi apparatus</location>
    </subcellularLocation>
    <text evidence="1">Probably part of the virion tugument.</text>
</comment>
<comment type="PTM">
    <text evidence="2">Phosphorylated.</text>
</comment>
<comment type="PTM">
    <text evidence="2">Palmitoylation is necessary for Golgi localization.</text>
</comment>
<comment type="similarity">
    <text evidence="4">Belongs to the herpesviridae UL51 family.</text>
</comment>
<sequence length="218" mass="23861">MAFYLPDWSCCGLWLFGRPRNRYSQLPEEPETFECPDRWRAEIDLGLPPGVQVGDLLRNEQTMGSLRQVYLLAVQANSITDHLKRFDAVRVPESCRGVVEAQVAKLEAVRSVIWNTMISLAVSGIEMDENGLKALLDKQAGDSLALMEMEKVATALKMDETGAWAQEISAVVSSVTAPSASAPFINSAFEPEVPTPVLAPPPVVRQPEHSGPTELALT</sequence>